<name>SYK_BORBR</name>
<keyword id="KW-0030">Aminoacyl-tRNA synthetase</keyword>
<keyword id="KW-0067">ATP-binding</keyword>
<keyword id="KW-0963">Cytoplasm</keyword>
<keyword id="KW-0436">Ligase</keyword>
<keyword id="KW-0460">Magnesium</keyword>
<keyword id="KW-0479">Metal-binding</keyword>
<keyword id="KW-0547">Nucleotide-binding</keyword>
<keyword id="KW-0648">Protein biosynthesis</keyword>
<proteinExistence type="inferred from homology"/>
<gene>
    <name evidence="1" type="primary">lysS</name>
    <name type="ordered locus">BB2293</name>
</gene>
<protein>
    <recommendedName>
        <fullName evidence="1">Lysine--tRNA ligase</fullName>
        <ecNumber evidence="1">6.1.1.6</ecNumber>
    </recommendedName>
    <alternativeName>
        <fullName evidence="1">Lysyl-tRNA synthetase</fullName>
        <shortName evidence="1">LysRS</shortName>
    </alternativeName>
</protein>
<comment type="catalytic activity">
    <reaction evidence="1">
        <text>tRNA(Lys) + L-lysine + ATP = L-lysyl-tRNA(Lys) + AMP + diphosphate</text>
        <dbReference type="Rhea" id="RHEA:20792"/>
        <dbReference type="Rhea" id="RHEA-COMP:9696"/>
        <dbReference type="Rhea" id="RHEA-COMP:9697"/>
        <dbReference type="ChEBI" id="CHEBI:30616"/>
        <dbReference type="ChEBI" id="CHEBI:32551"/>
        <dbReference type="ChEBI" id="CHEBI:33019"/>
        <dbReference type="ChEBI" id="CHEBI:78442"/>
        <dbReference type="ChEBI" id="CHEBI:78529"/>
        <dbReference type="ChEBI" id="CHEBI:456215"/>
        <dbReference type="EC" id="6.1.1.6"/>
    </reaction>
</comment>
<comment type="cofactor">
    <cofactor evidence="1">
        <name>Mg(2+)</name>
        <dbReference type="ChEBI" id="CHEBI:18420"/>
    </cofactor>
    <text evidence="1">Binds 3 Mg(2+) ions per subunit.</text>
</comment>
<comment type="subunit">
    <text evidence="1">Homodimer.</text>
</comment>
<comment type="subcellular location">
    <subcellularLocation>
        <location evidence="1">Cytoplasm</location>
    </subcellularLocation>
</comment>
<comment type="similarity">
    <text evidence="1">Belongs to the class-II aminoacyl-tRNA synthetase family.</text>
</comment>
<evidence type="ECO:0000255" key="1">
    <source>
        <dbReference type="HAMAP-Rule" id="MF_00252"/>
    </source>
</evidence>
<feature type="chain" id="PRO_0000152602" description="Lysine--tRNA ligase">
    <location>
        <begin position="1"/>
        <end position="506"/>
    </location>
</feature>
<feature type="binding site" evidence="1">
    <location>
        <position position="416"/>
    </location>
    <ligand>
        <name>Mg(2+)</name>
        <dbReference type="ChEBI" id="CHEBI:18420"/>
        <label>1</label>
    </ligand>
</feature>
<feature type="binding site" evidence="1">
    <location>
        <position position="423"/>
    </location>
    <ligand>
        <name>Mg(2+)</name>
        <dbReference type="ChEBI" id="CHEBI:18420"/>
        <label>1</label>
    </ligand>
</feature>
<feature type="binding site" evidence="1">
    <location>
        <position position="423"/>
    </location>
    <ligand>
        <name>Mg(2+)</name>
        <dbReference type="ChEBI" id="CHEBI:18420"/>
        <label>2</label>
    </ligand>
</feature>
<organism>
    <name type="scientific">Bordetella bronchiseptica (strain ATCC BAA-588 / NCTC 13252 / RB50)</name>
    <name type="common">Alcaligenes bronchisepticus</name>
    <dbReference type="NCBI Taxonomy" id="257310"/>
    <lineage>
        <taxon>Bacteria</taxon>
        <taxon>Pseudomonadati</taxon>
        <taxon>Pseudomonadota</taxon>
        <taxon>Betaproteobacteria</taxon>
        <taxon>Burkholderiales</taxon>
        <taxon>Alcaligenaceae</taxon>
        <taxon>Bordetella</taxon>
    </lineage>
</organism>
<sequence>MTDQSPAPTAQDENRLIAERRAKLARLRETGVAFPNDFVPDAHAADLHARYDGLDQEALTAAAVTVKVAGRMMLKRVMGKASFATLQDGSGRIQIYLERGTLGEEAYAAFKQWDIGDIIAIEGPVFKTNKGELSVHANSARLLSKSLRPLPDKFHGVADQELRYRQRYVDLIMTDATRRTFEARSKAVGGIRQTMLNAGFLEVETPMLHPIPGGAAAKPFVTHHNALDMQMFLRIAPELYLKRLIVGGFERVFEINRNFRNEGVSPRHNPEFTMMEFYAAYADYRWLMDFTEDLIRQAAIAATGSAVLSYQDRELDLSQPFDRLTICEAILKYAEGYTQAQLDDPAFVRAELRKLGANVEGPPLARAGLGALQLALFEETAEAKLWRPTYIIDYPVEVSPLARASDTRDGITERFELFITGREIANGFSELNDPEDQAERFRAQVEAKDAGDEEAMYFDADYIRALEYGMPPTGGCGIGIDRLVMLLTDSPSIRDVILFPHLRRED</sequence>
<accession>Q7WK46</accession>
<dbReference type="EC" id="6.1.1.6" evidence="1"/>
<dbReference type="EMBL" id="BX640443">
    <property type="protein sequence ID" value="CAE32789.1"/>
    <property type="molecule type" value="Genomic_DNA"/>
</dbReference>
<dbReference type="RefSeq" id="WP_010926446.1">
    <property type="nucleotide sequence ID" value="NC_002927.3"/>
</dbReference>
<dbReference type="SMR" id="Q7WK46"/>
<dbReference type="KEGG" id="bbr:BB2293"/>
<dbReference type="eggNOG" id="COG1190">
    <property type="taxonomic scope" value="Bacteria"/>
</dbReference>
<dbReference type="HOGENOM" id="CLU_008255_6_0_4"/>
<dbReference type="Proteomes" id="UP000001027">
    <property type="component" value="Chromosome"/>
</dbReference>
<dbReference type="GO" id="GO:0005829">
    <property type="term" value="C:cytosol"/>
    <property type="evidence" value="ECO:0007669"/>
    <property type="project" value="TreeGrafter"/>
</dbReference>
<dbReference type="GO" id="GO:0005524">
    <property type="term" value="F:ATP binding"/>
    <property type="evidence" value="ECO:0007669"/>
    <property type="project" value="UniProtKB-UniRule"/>
</dbReference>
<dbReference type="GO" id="GO:0004824">
    <property type="term" value="F:lysine-tRNA ligase activity"/>
    <property type="evidence" value="ECO:0007669"/>
    <property type="project" value="UniProtKB-UniRule"/>
</dbReference>
<dbReference type="GO" id="GO:0000287">
    <property type="term" value="F:magnesium ion binding"/>
    <property type="evidence" value="ECO:0007669"/>
    <property type="project" value="UniProtKB-UniRule"/>
</dbReference>
<dbReference type="GO" id="GO:0000049">
    <property type="term" value="F:tRNA binding"/>
    <property type="evidence" value="ECO:0007669"/>
    <property type="project" value="TreeGrafter"/>
</dbReference>
<dbReference type="GO" id="GO:0006430">
    <property type="term" value="P:lysyl-tRNA aminoacylation"/>
    <property type="evidence" value="ECO:0007669"/>
    <property type="project" value="UniProtKB-UniRule"/>
</dbReference>
<dbReference type="CDD" id="cd00775">
    <property type="entry name" value="LysRS_core"/>
    <property type="match status" value="1"/>
</dbReference>
<dbReference type="CDD" id="cd04322">
    <property type="entry name" value="LysRS_N"/>
    <property type="match status" value="1"/>
</dbReference>
<dbReference type="FunFam" id="2.40.50.140:FF:000024">
    <property type="entry name" value="Lysine--tRNA ligase"/>
    <property type="match status" value="1"/>
</dbReference>
<dbReference type="FunFam" id="3.30.930.10:FF:000001">
    <property type="entry name" value="Lysine--tRNA ligase"/>
    <property type="match status" value="1"/>
</dbReference>
<dbReference type="Gene3D" id="3.30.930.10">
    <property type="entry name" value="Bira Bifunctional Protein, Domain 2"/>
    <property type="match status" value="1"/>
</dbReference>
<dbReference type="Gene3D" id="2.40.50.140">
    <property type="entry name" value="Nucleic acid-binding proteins"/>
    <property type="match status" value="1"/>
</dbReference>
<dbReference type="HAMAP" id="MF_00252">
    <property type="entry name" value="Lys_tRNA_synth_class2"/>
    <property type="match status" value="1"/>
</dbReference>
<dbReference type="InterPro" id="IPR004364">
    <property type="entry name" value="Aa-tRNA-synt_II"/>
</dbReference>
<dbReference type="InterPro" id="IPR006195">
    <property type="entry name" value="aa-tRNA-synth_II"/>
</dbReference>
<dbReference type="InterPro" id="IPR045864">
    <property type="entry name" value="aa-tRNA-synth_II/BPL/LPL"/>
</dbReference>
<dbReference type="InterPro" id="IPR002313">
    <property type="entry name" value="Lys-tRNA-ligase_II"/>
</dbReference>
<dbReference type="InterPro" id="IPR044136">
    <property type="entry name" value="Lys-tRNA-ligase_II_N"/>
</dbReference>
<dbReference type="InterPro" id="IPR018149">
    <property type="entry name" value="Lys-tRNA-synth_II_C"/>
</dbReference>
<dbReference type="InterPro" id="IPR012340">
    <property type="entry name" value="NA-bd_OB-fold"/>
</dbReference>
<dbReference type="InterPro" id="IPR004365">
    <property type="entry name" value="NA-bd_OB_tRNA"/>
</dbReference>
<dbReference type="NCBIfam" id="TIGR00499">
    <property type="entry name" value="lysS_bact"/>
    <property type="match status" value="1"/>
</dbReference>
<dbReference type="NCBIfam" id="NF001756">
    <property type="entry name" value="PRK00484.1"/>
    <property type="match status" value="1"/>
</dbReference>
<dbReference type="PANTHER" id="PTHR42918:SF15">
    <property type="entry name" value="LYSINE--TRNA LIGASE, CHLOROPLASTIC_MITOCHONDRIAL"/>
    <property type="match status" value="1"/>
</dbReference>
<dbReference type="PANTHER" id="PTHR42918">
    <property type="entry name" value="LYSYL-TRNA SYNTHETASE"/>
    <property type="match status" value="1"/>
</dbReference>
<dbReference type="Pfam" id="PF00152">
    <property type="entry name" value="tRNA-synt_2"/>
    <property type="match status" value="1"/>
</dbReference>
<dbReference type="Pfam" id="PF01336">
    <property type="entry name" value="tRNA_anti-codon"/>
    <property type="match status" value="1"/>
</dbReference>
<dbReference type="PRINTS" id="PR00982">
    <property type="entry name" value="TRNASYNTHLYS"/>
</dbReference>
<dbReference type="SUPFAM" id="SSF55681">
    <property type="entry name" value="Class II aaRS and biotin synthetases"/>
    <property type="match status" value="1"/>
</dbReference>
<dbReference type="SUPFAM" id="SSF50249">
    <property type="entry name" value="Nucleic acid-binding proteins"/>
    <property type="match status" value="1"/>
</dbReference>
<dbReference type="PROSITE" id="PS50862">
    <property type="entry name" value="AA_TRNA_LIGASE_II"/>
    <property type="match status" value="1"/>
</dbReference>
<reference key="1">
    <citation type="journal article" date="2003" name="Nat. Genet.">
        <title>Comparative analysis of the genome sequences of Bordetella pertussis, Bordetella parapertussis and Bordetella bronchiseptica.</title>
        <authorList>
            <person name="Parkhill J."/>
            <person name="Sebaihia M."/>
            <person name="Preston A."/>
            <person name="Murphy L.D."/>
            <person name="Thomson N.R."/>
            <person name="Harris D.E."/>
            <person name="Holden M.T.G."/>
            <person name="Churcher C.M."/>
            <person name="Bentley S.D."/>
            <person name="Mungall K.L."/>
            <person name="Cerdeno-Tarraga A.-M."/>
            <person name="Temple L."/>
            <person name="James K.D."/>
            <person name="Harris B."/>
            <person name="Quail M.A."/>
            <person name="Achtman M."/>
            <person name="Atkin R."/>
            <person name="Baker S."/>
            <person name="Basham D."/>
            <person name="Bason N."/>
            <person name="Cherevach I."/>
            <person name="Chillingworth T."/>
            <person name="Collins M."/>
            <person name="Cronin A."/>
            <person name="Davis P."/>
            <person name="Doggett J."/>
            <person name="Feltwell T."/>
            <person name="Goble A."/>
            <person name="Hamlin N."/>
            <person name="Hauser H."/>
            <person name="Holroyd S."/>
            <person name="Jagels K."/>
            <person name="Leather S."/>
            <person name="Moule S."/>
            <person name="Norberczak H."/>
            <person name="O'Neil S."/>
            <person name="Ormond D."/>
            <person name="Price C."/>
            <person name="Rabbinowitsch E."/>
            <person name="Rutter S."/>
            <person name="Sanders M."/>
            <person name="Saunders D."/>
            <person name="Seeger K."/>
            <person name="Sharp S."/>
            <person name="Simmonds M."/>
            <person name="Skelton J."/>
            <person name="Squares R."/>
            <person name="Squares S."/>
            <person name="Stevens K."/>
            <person name="Unwin L."/>
            <person name="Whitehead S."/>
            <person name="Barrell B.G."/>
            <person name="Maskell D.J."/>
        </authorList>
    </citation>
    <scope>NUCLEOTIDE SEQUENCE [LARGE SCALE GENOMIC DNA]</scope>
    <source>
        <strain>ATCC BAA-588 / NCTC 13252 / RB50</strain>
    </source>
</reference>